<accession>P36250</accession>
<proteinExistence type="inferred from homology"/>
<name>RL11_LIBAS</name>
<keyword id="KW-0488">Methylation</keyword>
<keyword id="KW-0687">Ribonucleoprotein</keyword>
<keyword id="KW-0689">Ribosomal protein</keyword>
<keyword id="KW-0694">RNA-binding</keyword>
<keyword id="KW-0699">rRNA-binding</keyword>
<reference key="1">
    <citation type="journal article" date="1993" name="Curr. Microbiol.">
        <title>The genome of the non-cultured, bacterial-like organism associated with citrus greening disease contains the nusG-rplKAJL-rpoBC gene cluster and the gene for a bacteriophage type DNA polymerase.</title>
        <authorList>
            <person name="Villechanoux S."/>
            <person name="Garnier M."/>
            <person name="Laigret F."/>
            <person name="Renaudin J."/>
            <person name="Bove J.M."/>
        </authorList>
    </citation>
    <scope>NUCLEOTIDE SEQUENCE [GENOMIC DNA]</scope>
</reference>
<evidence type="ECO:0000250" key="1"/>
<evidence type="ECO:0000255" key="2">
    <source>
        <dbReference type="HAMAP-Rule" id="MF_00736"/>
    </source>
</evidence>
<evidence type="ECO:0000305" key="3"/>
<dbReference type="EMBL" id="M94319">
    <property type="protein sequence ID" value="AAA23105.1"/>
    <property type="molecule type" value="Genomic_DNA"/>
</dbReference>
<dbReference type="RefSeq" id="WP_012778367.1">
    <property type="nucleotide sequence ID" value="NZ_WOXD02000001.1"/>
</dbReference>
<dbReference type="SMR" id="P36250"/>
<dbReference type="GeneID" id="93076391"/>
<dbReference type="OMA" id="CKQFNAK"/>
<dbReference type="GO" id="GO:0022625">
    <property type="term" value="C:cytosolic large ribosomal subunit"/>
    <property type="evidence" value="ECO:0007669"/>
    <property type="project" value="TreeGrafter"/>
</dbReference>
<dbReference type="GO" id="GO:0070180">
    <property type="term" value="F:large ribosomal subunit rRNA binding"/>
    <property type="evidence" value="ECO:0007669"/>
    <property type="project" value="UniProtKB-UniRule"/>
</dbReference>
<dbReference type="GO" id="GO:0003735">
    <property type="term" value="F:structural constituent of ribosome"/>
    <property type="evidence" value="ECO:0007669"/>
    <property type="project" value="InterPro"/>
</dbReference>
<dbReference type="GO" id="GO:0006412">
    <property type="term" value="P:translation"/>
    <property type="evidence" value="ECO:0007669"/>
    <property type="project" value="UniProtKB-UniRule"/>
</dbReference>
<dbReference type="CDD" id="cd00349">
    <property type="entry name" value="Ribosomal_L11"/>
    <property type="match status" value="1"/>
</dbReference>
<dbReference type="FunFam" id="3.30.1550.10:FF:000005">
    <property type="entry name" value="50S ribosomal protein L11"/>
    <property type="match status" value="1"/>
</dbReference>
<dbReference type="Gene3D" id="1.10.10.250">
    <property type="entry name" value="Ribosomal protein L11, C-terminal domain"/>
    <property type="match status" value="1"/>
</dbReference>
<dbReference type="Gene3D" id="3.30.1550.10">
    <property type="entry name" value="Ribosomal protein L11/L12, N-terminal domain"/>
    <property type="match status" value="1"/>
</dbReference>
<dbReference type="HAMAP" id="MF_00736">
    <property type="entry name" value="Ribosomal_uL11"/>
    <property type="match status" value="1"/>
</dbReference>
<dbReference type="InterPro" id="IPR000911">
    <property type="entry name" value="Ribosomal_uL11"/>
</dbReference>
<dbReference type="InterPro" id="IPR006519">
    <property type="entry name" value="Ribosomal_uL11_bac-typ"/>
</dbReference>
<dbReference type="InterPro" id="IPR020783">
    <property type="entry name" value="Ribosomal_uL11_C"/>
</dbReference>
<dbReference type="InterPro" id="IPR036769">
    <property type="entry name" value="Ribosomal_uL11_C_sf"/>
</dbReference>
<dbReference type="InterPro" id="IPR020785">
    <property type="entry name" value="Ribosomal_uL11_CS"/>
</dbReference>
<dbReference type="InterPro" id="IPR020784">
    <property type="entry name" value="Ribosomal_uL11_N"/>
</dbReference>
<dbReference type="InterPro" id="IPR036796">
    <property type="entry name" value="Ribosomal_uL11_N_sf"/>
</dbReference>
<dbReference type="NCBIfam" id="TIGR01632">
    <property type="entry name" value="L11_bact"/>
    <property type="match status" value="1"/>
</dbReference>
<dbReference type="PANTHER" id="PTHR11661">
    <property type="entry name" value="60S RIBOSOMAL PROTEIN L12"/>
    <property type="match status" value="1"/>
</dbReference>
<dbReference type="PANTHER" id="PTHR11661:SF1">
    <property type="entry name" value="LARGE RIBOSOMAL SUBUNIT PROTEIN UL11M"/>
    <property type="match status" value="1"/>
</dbReference>
<dbReference type="Pfam" id="PF00298">
    <property type="entry name" value="Ribosomal_L11"/>
    <property type="match status" value="1"/>
</dbReference>
<dbReference type="Pfam" id="PF03946">
    <property type="entry name" value="Ribosomal_L11_N"/>
    <property type="match status" value="1"/>
</dbReference>
<dbReference type="SMART" id="SM00649">
    <property type="entry name" value="RL11"/>
    <property type="match status" value="1"/>
</dbReference>
<dbReference type="SUPFAM" id="SSF54747">
    <property type="entry name" value="Ribosomal L11/L12e N-terminal domain"/>
    <property type="match status" value="1"/>
</dbReference>
<dbReference type="SUPFAM" id="SSF46906">
    <property type="entry name" value="Ribosomal protein L11, C-terminal domain"/>
    <property type="match status" value="1"/>
</dbReference>
<dbReference type="PROSITE" id="PS00359">
    <property type="entry name" value="RIBOSOMAL_L11"/>
    <property type="match status" value="1"/>
</dbReference>
<gene>
    <name evidence="2" type="primary">rplK</name>
</gene>
<feature type="initiator methionine" description="Removed" evidence="1">
    <location>
        <position position="1"/>
    </location>
</feature>
<feature type="chain" id="PRO_0000104308" description="Large ribosomal subunit protein uL11">
    <location>
        <begin position="2"/>
        <end position="142"/>
    </location>
</feature>
<comment type="function">
    <text evidence="2">Forms part of the ribosomal stalk which helps the ribosome interact with GTP-bound translation factors.</text>
</comment>
<comment type="subunit">
    <text evidence="2">Part of the ribosomal stalk of the 50S ribosomal subunit. Interacts with L10 and the large rRNA to form the base of the stalk. L10 forms an elongated spine to which L12 dimers bind in a sequential fashion forming a multimeric L10(L12)X complex.</text>
</comment>
<comment type="PTM">
    <text evidence="2">One or more lysine residues are methylated.</text>
</comment>
<comment type="similarity">
    <text evidence="2">Belongs to the universal ribosomal protein uL11 family.</text>
</comment>
<protein>
    <recommendedName>
        <fullName evidence="2">Large ribosomal subunit protein uL11</fullName>
    </recommendedName>
    <alternativeName>
        <fullName evidence="3">50S ribosomal protein L11</fullName>
    </alternativeName>
</protein>
<organism>
    <name type="scientific">Liberibacter asiaticus</name>
    <name type="common">Citrus greening disease</name>
    <name type="synonym">Liberobacter asiaticum</name>
    <dbReference type="NCBI Taxonomy" id="34021"/>
    <lineage>
        <taxon>Bacteria</taxon>
        <taxon>Pseudomonadati</taxon>
        <taxon>Pseudomonadota</taxon>
        <taxon>Alphaproteobacteria</taxon>
        <taxon>Hyphomicrobiales</taxon>
        <taxon>Rhizobiaceae</taxon>
        <taxon>Liberibacter</taxon>
    </lineage>
</organism>
<sequence length="142" mass="15017">MAKVVSRIVKLQIESGSAKPSPPVGPAIGQAGIPIMAFCKAFNAATEGMEKGIPIPTTVTCYKDKSFTFTMSQPPVSFFLKKEVGIKSGSKLPGKESCGSITRENIRKIAQLKMQDMGAIDIEGAMRMVEGSACSMGISVVD</sequence>